<feature type="chain" id="PRO_1000212067" description="Ribonuclease PH">
    <location>
        <begin position="1"/>
        <end position="240"/>
    </location>
</feature>
<feature type="binding site" evidence="1">
    <location>
        <position position="87"/>
    </location>
    <ligand>
        <name>phosphate</name>
        <dbReference type="ChEBI" id="CHEBI:43474"/>
        <note>substrate</note>
    </ligand>
</feature>
<feature type="binding site" evidence="1">
    <location>
        <begin position="125"/>
        <end position="127"/>
    </location>
    <ligand>
        <name>phosphate</name>
        <dbReference type="ChEBI" id="CHEBI:43474"/>
        <note>substrate</note>
    </ligand>
</feature>
<comment type="function">
    <text evidence="1">Phosphorolytic 3'-5' exoribonuclease that plays an important role in tRNA 3'-end maturation. Removes nucleotide residues following the 3'-CCA terminus of tRNAs; can also add nucleotides to the ends of RNA molecules by using nucleoside diphosphates as substrates, but this may not be physiologically important. Probably plays a role in initiation of 16S rRNA degradation (leading to ribosome degradation) during starvation.</text>
</comment>
<comment type="catalytic activity">
    <reaction evidence="1">
        <text>tRNA(n+1) + phosphate = tRNA(n) + a ribonucleoside 5'-diphosphate</text>
        <dbReference type="Rhea" id="RHEA:10628"/>
        <dbReference type="Rhea" id="RHEA-COMP:17343"/>
        <dbReference type="Rhea" id="RHEA-COMP:17344"/>
        <dbReference type="ChEBI" id="CHEBI:43474"/>
        <dbReference type="ChEBI" id="CHEBI:57930"/>
        <dbReference type="ChEBI" id="CHEBI:173114"/>
        <dbReference type="EC" id="2.7.7.56"/>
    </reaction>
</comment>
<comment type="subunit">
    <text evidence="1">Homohexameric ring arranged as a trimer of dimers.</text>
</comment>
<comment type="similarity">
    <text evidence="1">Belongs to the RNase PH family.</text>
</comment>
<evidence type="ECO:0000255" key="1">
    <source>
        <dbReference type="HAMAP-Rule" id="MF_00564"/>
    </source>
</evidence>
<protein>
    <recommendedName>
        <fullName evidence="1">Ribonuclease PH</fullName>
        <shortName evidence="1">RNase PH</shortName>
        <ecNumber evidence="1">2.7.7.56</ecNumber>
    </recommendedName>
    <alternativeName>
        <fullName evidence="1">tRNA nucleotidyltransferase</fullName>
    </alternativeName>
</protein>
<sequence length="240" mass="25661">MKRPSGRAADQLRSIRITRNYTKHAEGSVLVEFGDTKVICTVSVENGVPRFLKGQGQGWLTAEYGMLPRATGERNQREASRGKQGGRTLEIQRLIGRSLRAALDMSKLGDVTLYVDCDVIQADGGTRTASITGAMVALVDALKVIKKRGGLKAGDPLKQMIAAVSVGMYQGEPVLDLDYLEDSAAETDLNVVMTSTGGFIEVQGTAEGAPFQPADLNAMLALAQKGMTEIFELQNAALAD</sequence>
<dbReference type="EC" id="2.7.7.56" evidence="1"/>
<dbReference type="EMBL" id="AM181176">
    <property type="protein sequence ID" value="CAY53520.1"/>
    <property type="molecule type" value="Genomic_DNA"/>
</dbReference>
<dbReference type="RefSeq" id="WP_010207511.1">
    <property type="nucleotide sequence ID" value="NC_012660.1"/>
</dbReference>
<dbReference type="SMR" id="C3K479"/>
<dbReference type="STRING" id="294.SRM1_05687"/>
<dbReference type="GeneID" id="93467619"/>
<dbReference type="eggNOG" id="COG0689">
    <property type="taxonomic scope" value="Bacteria"/>
</dbReference>
<dbReference type="HOGENOM" id="CLU_050858_0_0_6"/>
<dbReference type="OrthoDB" id="9802265at2"/>
<dbReference type="GO" id="GO:0000175">
    <property type="term" value="F:3'-5'-RNA exonuclease activity"/>
    <property type="evidence" value="ECO:0007669"/>
    <property type="project" value="UniProtKB-UniRule"/>
</dbReference>
<dbReference type="GO" id="GO:0000049">
    <property type="term" value="F:tRNA binding"/>
    <property type="evidence" value="ECO:0007669"/>
    <property type="project" value="UniProtKB-UniRule"/>
</dbReference>
<dbReference type="GO" id="GO:0009022">
    <property type="term" value="F:tRNA nucleotidyltransferase activity"/>
    <property type="evidence" value="ECO:0007669"/>
    <property type="project" value="UniProtKB-UniRule"/>
</dbReference>
<dbReference type="GO" id="GO:0016075">
    <property type="term" value="P:rRNA catabolic process"/>
    <property type="evidence" value="ECO:0007669"/>
    <property type="project" value="UniProtKB-UniRule"/>
</dbReference>
<dbReference type="GO" id="GO:0006364">
    <property type="term" value="P:rRNA processing"/>
    <property type="evidence" value="ECO:0007669"/>
    <property type="project" value="UniProtKB-KW"/>
</dbReference>
<dbReference type="GO" id="GO:0008033">
    <property type="term" value="P:tRNA processing"/>
    <property type="evidence" value="ECO:0007669"/>
    <property type="project" value="UniProtKB-UniRule"/>
</dbReference>
<dbReference type="CDD" id="cd11362">
    <property type="entry name" value="RNase_PH_bact"/>
    <property type="match status" value="1"/>
</dbReference>
<dbReference type="FunFam" id="3.30.230.70:FF:000003">
    <property type="entry name" value="Ribonuclease PH"/>
    <property type="match status" value="1"/>
</dbReference>
<dbReference type="Gene3D" id="3.30.230.70">
    <property type="entry name" value="GHMP Kinase, N-terminal domain"/>
    <property type="match status" value="1"/>
</dbReference>
<dbReference type="HAMAP" id="MF_00564">
    <property type="entry name" value="RNase_PH"/>
    <property type="match status" value="1"/>
</dbReference>
<dbReference type="InterPro" id="IPR001247">
    <property type="entry name" value="ExoRNase_PH_dom1"/>
</dbReference>
<dbReference type="InterPro" id="IPR015847">
    <property type="entry name" value="ExoRNase_PH_dom2"/>
</dbReference>
<dbReference type="InterPro" id="IPR036345">
    <property type="entry name" value="ExoRNase_PH_dom2_sf"/>
</dbReference>
<dbReference type="InterPro" id="IPR027408">
    <property type="entry name" value="PNPase/RNase_PH_dom_sf"/>
</dbReference>
<dbReference type="InterPro" id="IPR020568">
    <property type="entry name" value="Ribosomal_Su5_D2-typ_SF"/>
</dbReference>
<dbReference type="InterPro" id="IPR050080">
    <property type="entry name" value="RNase_PH"/>
</dbReference>
<dbReference type="InterPro" id="IPR002381">
    <property type="entry name" value="RNase_PH_bac-type"/>
</dbReference>
<dbReference type="InterPro" id="IPR018336">
    <property type="entry name" value="RNase_PH_CS"/>
</dbReference>
<dbReference type="NCBIfam" id="TIGR01966">
    <property type="entry name" value="RNasePH"/>
    <property type="match status" value="1"/>
</dbReference>
<dbReference type="PANTHER" id="PTHR11953">
    <property type="entry name" value="EXOSOME COMPLEX COMPONENT"/>
    <property type="match status" value="1"/>
</dbReference>
<dbReference type="PANTHER" id="PTHR11953:SF0">
    <property type="entry name" value="EXOSOME COMPLEX COMPONENT RRP41"/>
    <property type="match status" value="1"/>
</dbReference>
<dbReference type="Pfam" id="PF01138">
    <property type="entry name" value="RNase_PH"/>
    <property type="match status" value="1"/>
</dbReference>
<dbReference type="Pfam" id="PF03725">
    <property type="entry name" value="RNase_PH_C"/>
    <property type="match status" value="1"/>
</dbReference>
<dbReference type="SUPFAM" id="SSF55666">
    <property type="entry name" value="Ribonuclease PH domain 2-like"/>
    <property type="match status" value="1"/>
</dbReference>
<dbReference type="SUPFAM" id="SSF54211">
    <property type="entry name" value="Ribosomal protein S5 domain 2-like"/>
    <property type="match status" value="1"/>
</dbReference>
<dbReference type="PROSITE" id="PS01277">
    <property type="entry name" value="RIBONUCLEASE_PH"/>
    <property type="match status" value="1"/>
</dbReference>
<keyword id="KW-0548">Nucleotidyltransferase</keyword>
<keyword id="KW-0694">RNA-binding</keyword>
<keyword id="KW-0698">rRNA processing</keyword>
<keyword id="KW-0808">Transferase</keyword>
<keyword id="KW-0819">tRNA processing</keyword>
<keyword id="KW-0820">tRNA-binding</keyword>
<name>RNPH_PSEFS</name>
<accession>C3K479</accession>
<reference key="1">
    <citation type="journal article" date="2009" name="Genome Biol.">
        <title>Genomic and genetic analyses of diversity and plant interactions of Pseudomonas fluorescens.</title>
        <authorList>
            <person name="Silby M.W."/>
            <person name="Cerdeno-Tarraga A.M."/>
            <person name="Vernikos G.S."/>
            <person name="Giddens S.R."/>
            <person name="Jackson R.W."/>
            <person name="Preston G.M."/>
            <person name="Zhang X.-X."/>
            <person name="Moon C.D."/>
            <person name="Gehrig S.M."/>
            <person name="Godfrey S.A.C."/>
            <person name="Knight C.G."/>
            <person name="Malone J.G."/>
            <person name="Robinson Z."/>
            <person name="Spiers A.J."/>
            <person name="Harris S."/>
            <person name="Challis G.L."/>
            <person name="Yaxley A.M."/>
            <person name="Harris D."/>
            <person name="Seeger K."/>
            <person name="Murphy L."/>
            <person name="Rutter S."/>
            <person name="Squares R."/>
            <person name="Quail M.A."/>
            <person name="Saunders E."/>
            <person name="Mavromatis K."/>
            <person name="Brettin T.S."/>
            <person name="Bentley S.D."/>
            <person name="Hothersall J."/>
            <person name="Stephens E."/>
            <person name="Thomas C.M."/>
            <person name="Parkhill J."/>
            <person name="Levy S.B."/>
            <person name="Rainey P.B."/>
            <person name="Thomson N.R."/>
        </authorList>
    </citation>
    <scope>NUCLEOTIDE SEQUENCE [LARGE SCALE GENOMIC DNA]</scope>
    <source>
        <strain>SBW25</strain>
    </source>
</reference>
<organism>
    <name type="scientific">Pseudomonas fluorescens (strain SBW25)</name>
    <dbReference type="NCBI Taxonomy" id="216595"/>
    <lineage>
        <taxon>Bacteria</taxon>
        <taxon>Pseudomonadati</taxon>
        <taxon>Pseudomonadota</taxon>
        <taxon>Gammaproteobacteria</taxon>
        <taxon>Pseudomonadales</taxon>
        <taxon>Pseudomonadaceae</taxon>
        <taxon>Pseudomonas</taxon>
    </lineage>
</organism>
<proteinExistence type="inferred from homology"/>
<gene>
    <name evidence="1" type="primary">rph</name>
    <name type="ordered locus">PFLU_5991</name>
</gene>